<sequence length="371" mass="41458">MSNDSIHWEARYLPAGPPRLLGWNVPAEELIHIPEHWLVYPEPNPSLHYLLALLYILFTFLALLGNGLVIWIFCAAKSLRTPSNMFVVNLAICDFFMMIKTPIFIYNSFNTGFALGNLGCQIFAVIGSLTGIGAAITNAAIAYDRYSTIARPLDGKLSRGQVILFIVLIWTYTIPWALMPVMGVWGRFVPEGFLTSCSFDYLTDTNEIRIFVATIFTFSYCIPMILIIYYYSQIVSHVVNHEKALREQAKKMNVDSLRSNANTSSQSAEIRIAKAAITICFLYVLSWTPYGVMSMIGAFGNKALLTPGVTMIPACTCKAVACLDPYVYAISHPKYRLELQKRLPWLELQEKPISDSTSTTTETVNTPPASS</sequence>
<dbReference type="EMBL" id="AF004169">
    <property type="protein sequence ID" value="AAC13418.1"/>
    <property type="molecule type" value="mRNA"/>
</dbReference>
<dbReference type="EMBL" id="AADG06009813">
    <property type="status" value="NOT_ANNOTATED_CDS"/>
    <property type="molecule type" value="Genomic_DNA"/>
</dbReference>
<dbReference type="EMBL" id="BK005513">
    <property type="protein sequence ID" value="DAA05738.1"/>
    <property type="molecule type" value="Genomic_DNA"/>
</dbReference>
<dbReference type="RefSeq" id="NP_001011605.1">
    <property type="nucleotide sequence ID" value="NM_001011605.1"/>
</dbReference>
<dbReference type="SMR" id="O61303"/>
<dbReference type="FunCoup" id="O61303">
    <property type="interactions" value="96"/>
</dbReference>
<dbReference type="STRING" id="7460.O61303"/>
<dbReference type="GlyCosmos" id="O61303">
    <property type="glycosylation" value="1 site, No reported glycans"/>
</dbReference>
<dbReference type="PaxDb" id="7460-GB51369-PA"/>
<dbReference type="EnsemblMetazoa" id="NM_001011605">
    <property type="protein sequence ID" value="NP_001011605"/>
    <property type="gene ID" value="GeneID_406127"/>
</dbReference>
<dbReference type="GeneID" id="406127"/>
<dbReference type="KEGG" id="ame:406127"/>
<dbReference type="CTD" id="100124184"/>
<dbReference type="eggNOG" id="KOG3656">
    <property type="taxonomic scope" value="Eukaryota"/>
</dbReference>
<dbReference type="HOGENOM" id="CLU_009579_3_0_1"/>
<dbReference type="InParanoid" id="O61303"/>
<dbReference type="OMA" id="PACACKF"/>
<dbReference type="OrthoDB" id="2105199at2759"/>
<dbReference type="PhylomeDB" id="O61303"/>
<dbReference type="Proteomes" id="UP000005203">
    <property type="component" value="Linkage group LG10"/>
</dbReference>
<dbReference type="GO" id="GO:0016020">
    <property type="term" value="C:membrane"/>
    <property type="evidence" value="ECO:0007669"/>
    <property type="project" value="UniProtKB-SubCell"/>
</dbReference>
<dbReference type="GO" id="GO:0004930">
    <property type="term" value="F:G protein-coupled receptor activity"/>
    <property type="evidence" value="ECO:0007669"/>
    <property type="project" value="UniProtKB-KW"/>
</dbReference>
<dbReference type="GO" id="GO:0009881">
    <property type="term" value="F:photoreceptor activity"/>
    <property type="evidence" value="ECO:0000314"/>
    <property type="project" value="CACAO"/>
</dbReference>
<dbReference type="GO" id="GO:0007602">
    <property type="term" value="P:phototransduction"/>
    <property type="evidence" value="ECO:0007669"/>
    <property type="project" value="UniProtKB-KW"/>
</dbReference>
<dbReference type="GO" id="GO:0007601">
    <property type="term" value="P:visual perception"/>
    <property type="evidence" value="ECO:0007669"/>
    <property type="project" value="UniProtKB-KW"/>
</dbReference>
<dbReference type="CDD" id="cd15079">
    <property type="entry name" value="7tmA_photoreceptors_insect"/>
    <property type="match status" value="1"/>
</dbReference>
<dbReference type="FunFam" id="1.20.1070.10:FF:000044">
    <property type="entry name" value="Opsin, ultraviolet-sensitive"/>
    <property type="match status" value="1"/>
</dbReference>
<dbReference type="Gene3D" id="1.20.1070.10">
    <property type="entry name" value="Rhodopsin 7-helix transmembrane proteins"/>
    <property type="match status" value="1"/>
</dbReference>
<dbReference type="InterPro" id="IPR050125">
    <property type="entry name" value="GPCR_opsins"/>
</dbReference>
<dbReference type="InterPro" id="IPR000276">
    <property type="entry name" value="GPCR_Rhodpsn"/>
</dbReference>
<dbReference type="InterPro" id="IPR017452">
    <property type="entry name" value="GPCR_Rhodpsn_7TM"/>
</dbReference>
<dbReference type="InterPro" id="IPR001760">
    <property type="entry name" value="Opsin"/>
</dbReference>
<dbReference type="InterPro" id="IPR027430">
    <property type="entry name" value="Retinal_BS"/>
</dbReference>
<dbReference type="PANTHER" id="PTHR24240">
    <property type="entry name" value="OPSIN"/>
    <property type="match status" value="1"/>
</dbReference>
<dbReference type="Pfam" id="PF00001">
    <property type="entry name" value="7tm_1"/>
    <property type="match status" value="1"/>
</dbReference>
<dbReference type="PRINTS" id="PR00237">
    <property type="entry name" value="GPCRRHODOPSN"/>
</dbReference>
<dbReference type="PRINTS" id="PR00238">
    <property type="entry name" value="OPSIN"/>
</dbReference>
<dbReference type="PRINTS" id="PR00577">
    <property type="entry name" value="OPSINRH3RH4"/>
</dbReference>
<dbReference type="SUPFAM" id="SSF81321">
    <property type="entry name" value="Family A G protein-coupled receptor-like"/>
    <property type="match status" value="1"/>
</dbReference>
<dbReference type="PROSITE" id="PS00237">
    <property type="entry name" value="G_PROTEIN_RECEP_F1_1"/>
    <property type="match status" value="1"/>
</dbReference>
<dbReference type="PROSITE" id="PS50262">
    <property type="entry name" value="G_PROTEIN_RECEP_F1_2"/>
    <property type="match status" value="1"/>
</dbReference>
<dbReference type="PROSITE" id="PS00238">
    <property type="entry name" value="OPSIN"/>
    <property type="match status" value="1"/>
</dbReference>
<name>OPSUV_APIME</name>
<comment type="function">
    <text>Visual pigments are the light-absorbing molecules that mediate vision. They consist of an apoprotein, opsin, covalently linked to 11-cis-retinal.</text>
</comment>
<comment type="biophysicochemical properties">
    <absorption>
        <max>353 nm</max>
    </absorption>
</comment>
<comment type="subcellular location">
    <subcellularLocation>
        <location>Membrane</location>
        <topology>Multi-pass membrane protein</topology>
    </subcellularLocation>
</comment>
<comment type="tissue specificity">
    <text evidence="4">Expressed in the dorsal region of the retina.</text>
</comment>
<comment type="PTM">
    <text evidence="1">Phosphorylated on some or all of the serine and threonine residues present in the C-terminal region.</text>
</comment>
<comment type="similarity">
    <text evidence="3">Belongs to the G-protein coupled receptor 1 family. Opsin subfamily.</text>
</comment>
<feature type="chain" id="PRO_0000197639" description="Opsin, ultraviolet-sensitive">
    <location>
        <begin position="1"/>
        <end position="371"/>
    </location>
</feature>
<feature type="topological domain" description="Extracellular" evidence="2">
    <location>
        <begin position="1"/>
        <end position="52"/>
    </location>
</feature>
<feature type="transmembrane region" description="Helical; Name=1" evidence="2">
    <location>
        <begin position="53"/>
        <end position="73"/>
    </location>
</feature>
<feature type="topological domain" description="Cytoplasmic" evidence="2">
    <location>
        <begin position="74"/>
        <end position="84"/>
    </location>
</feature>
<feature type="transmembrane region" description="Helical; Name=2" evidence="2">
    <location>
        <begin position="85"/>
        <end position="105"/>
    </location>
</feature>
<feature type="topological domain" description="Extracellular" evidence="2">
    <location>
        <begin position="106"/>
        <end position="121"/>
    </location>
</feature>
<feature type="transmembrane region" description="Helical; Name=3" evidence="2">
    <location>
        <begin position="122"/>
        <end position="142"/>
    </location>
</feature>
<feature type="topological domain" description="Cytoplasmic" evidence="2">
    <location>
        <begin position="143"/>
        <end position="161"/>
    </location>
</feature>
<feature type="transmembrane region" description="Helical; Name=4" evidence="2">
    <location>
        <begin position="162"/>
        <end position="182"/>
    </location>
</feature>
<feature type="topological domain" description="Extracellular" evidence="2">
    <location>
        <begin position="183"/>
        <end position="209"/>
    </location>
</feature>
<feature type="transmembrane region" description="Helical; Name=5" evidence="2">
    <location>
        <begin position="210"/>
        <end position="230"/>
    </location>
</feature>
<feature type="topological domain" description="Cytoplasmic" evidence="2">
    <location>
        <begin position="231"/>
        <end position="278"/>
    </location>
</feature>
<feature type="transmembrane region" description="Helical; Name=6" evidence="2">
    <location>
        <begin position="279"/>
        <end position="299"/>
    </location>
</feature>
<feature type="topological domain" description="Extracellular" evidence="2">
    <location>
        <begin position="300"/>
        <end position="302"/>
    </location>
</feature>
<feature type="transmembrane region" description="Helical; Name=7" evidence="2">
    <location>
        <begin position="303"/>
        <end position="323"/>
    </location>
</feature>
<feature type="topological domain" description="Cytoplasmic" evidence="2">
    <location>
        <begin position="324"/>
        <end position="371"/>
    </location>
</feature>
<feature type="modified residue" description="N6-(retinylidene)lysine" evidence="1">
    <location>
        <position position="318"/>
    </location>
</feature>
<feature type="glycosylation site" description="N-linked (GlcNAc...) asparagine" evidence="2">
    <location>
        <position position="3"/>
    </location>
</feature>
<feature type="disulfide bond" evidence="3">
    <location>
        <begin position="120"/>
        <end position="197"/>
    </location>
</feature>
<reference key="1">
    <citation type="journal article" date="1998" name="J. Neurosci.">
        <title>Honeybee blue- and ultraviolet-sensitive opsins: cloning, heterologous expression in Drosophila, and physiological characterization.</title>
        <authorList>
            <person name="Townson S.M."/>
            <person name="Chang B.S.W."/>
            <person name="Salcedo E."/>
            <person name="Chadwell L.V."/>
            <person name="Pierce N.E."/>
            <person name="Britt S.G."/>
        </authorList>
    </citation>
    <scope>NUCLEOTIDE SEQUENCE [MRNA]</scope>
    <source>
        <tissue>Head</tissue>
    </source>
</reference>
<reference key="2">
    <citation type="submission" date="2010-11" db="EMBL/GenBank/DDBJ databases">
        <authorList>
            <consortium name="Honey bee genome project"/>
            <person name="Zhang L."/>
            <person name="Deng J."/>
            <person name="Wu Y.-Q."/>
            <person name="Kovar C."/>
            <person name="Aqrawi P."/>
            <person name="Bandaranaike D."/>
            <person name="Blankenburg K."/>
            <person name="Chen D."/>
            <person name="Denson S."/>
            <person name="Dinh H."/>
            <person name="Firestine M."/>
            <person name="Gross S."/>
            <person name="Han Y."/>
            <person name="Hernandez B."/>
            <person name="Holder M."/>
            <person name="Jackson L."/>
            <person name="Javaid M."/>
            <person name="Jing C."/>
            <person name="Jones J."/>
            <person name="Joshi V."/>
            <person name="Kamau G."/>
            <person name="Korchina V."/>
            <person name="Lee S."/>
            <person name="Lorensuhewa L."/>
            <person name="Mata R."/>
            <person name="Mathew T."/>
            <person name="Mims S."/>
            <person name="Ngo R."/>
            <person name="Nguyen L."/>
            <person name="Okwuonu G."/>
            <person name="Ongeri F."/>
            <person name="Osuji N."/>
            <person name="Pham C."/>
            <person name="Puazo M."/>
            <person name="Qu C."/>
            <person name="Quiroz J."/>
            <person name="Raj R."/>
            <person name="Rio Deiros D."/>
            <person name="Santibanez J."/>
            <person name="Scheel M."/>
            <person name="Scherer S."/>
            <person name="Vee V."/>
            <person name="Wang M."/>
            <person name="Xin Y."/>
            <person name="Richards S."/>
            <person name="Reid J.G."/>
            <person name="Newsham I."/>
            <person name="Worley K.C."/>
            <person name="Muzny D.M."/>
            <person name="Gibbs R."/>
        </authorList>
    </citation>
    <scope>NUCLEOTIDE SEQUENCE [LARGE SCALE GENOMIC DNA]</scope>
    <source>
        <strain>DH4</strain>
    </source>
</reference>
<reference key="3">
    <citation type="journal article" date="2005" name="Insect Biochem. Mol. Biol.">
        <title>Pteropsin: a vertebrate-like non-visual opsin expressed in the honey bee brain.</title>
        <authorList>
            <person name="Velarde R.A."/>
            <person name="Sauer C.D."/>
            <person name="Walden K.K.O."/>
            <person name="Fahrbach S.E."/>
            <person name="Robertson H.M."/>
        </authorList>
    </citation>
    <scope>IDENTIFICATION</scope>
    <scope>TISSUE SPECIFICITY</scope>
</reference>
<evidence type="ECO:0000250" key="1"/>
<evidence type="ECO:0000255" key="2"/>
<evidence type="ECO:0000255" key="3">
    <source>
        <dbReference type="PROSITE-ProRule" id="PRU00521"/>
    </source>
</evidence>
<evidence type="ECO:0000269" key="4">
    <source>
    </source>
</evidence>
<protein>
    <recommendedName>
        <fullName>Opsin, ultraviolet-sensitive</fullName>
    </recommendedName>
    <alternativeName>
        <fullName>UV-sensitive opsin</fullName>
        <shortName>AmUVop</shortName>
        <shortName>BUVOPS</shortName>
    </alternativeName>
</protein>
<keyword id="KW-0157">Chromophore</keyword>
<keyword id="KW-1015">Disulfide bond</keyword>
<keyword id="KW-0297">G-protein coupled receptor</keyword>
<keyword id="KW-0325">Glycoprotein</keyword>
<keyword id="KW-0472">Membrane</keyword>
<keyword id="KW-0597">Phosphoprotein</keyword>
<keyword id="KW-0600">Photoreceptor protein</keyword>
<keyword id="KW-0675">Receptor</keyword>
<keyword id="KW-1185">Reference proteome</keyword>
<keyword id="KW-0681">Retinal protein</keyword>
<keyword id="KW-0716">Sensory transduction</keyword>
<keyword id="KW-0807">Transducer</keyword>
<keyword id="KW-0812">Transmembrane</keyword>
<keyword id="KW-1133">Transmembrane helix</keyword>
<keyword id="KW-0844">Vision</keyword>
<accession>O61303</accession>
<accession>Q2YD68</accession>
<proteinExistence type="evidence at protein level"/>
<organism>
    <name type="scientific">Apis mellifera</name>
    <name type="common">Honeybee</name>
    <dbReference type="NCBI Taxonomy" id="7460"/>
    <lineage>
        <taxon>Eukaryota</taxon>
        <taxon>Metazoa</taxon>
        <taxon>Ecdysozoa</taxon>
        <taxon>Arthropoda</taxon>
        <taxon>Hexapoda</taxon>
        <taxon>Insecta</taxon>
        <taxon>Pterygota</taxon>
        <taxon>Neoptera</taxon>
        <taxon>Endopterygota</taxon>
        <taxon>Hymenoptera</taxon>
        <taxon>Apocrita</taxon>
        <taxon>Aculeata</taxon>
        <taxon>Apoidea</taxon>
        <taxon>Anthophila</taxon>
        <taxon>Apidae</taxon>
        <taxon>Apis</taxon>
    </lineage>
</organism>
<gene>
    <name type="primary">UVOP</name>
</gene>